<sequence length="843" mass="96696">MAKPLTDSEKRKQISVRGLAGLGDVAEVRKSFNRHLHFTLVKDRNVATPRDYFFALAHTVRDHLVGRWIRTQQHYYERDPKRIYYLSLEFYMGRTLQNTMVNLGLQNACDEAIYQLGLDLEELEEIEEDAGLGNGGLGRLAACFLDSMATLGLAAYGYGIRYEFGIFNQKIVNGWQVEEADDWLRYGNPWEKARPEYMLPVHFYGRVEHTPDGVKWLDTQVVLAMPYDTPVPGYKNNTVNTMRLWSAKAPNDFKLQDFNVGDYIEAVLDRNLAENISRVLYPNDNFFEGKELRLKQEYFVVAATLQDIIRRFKSSKFGCRDPVRTCFETFPDKVAIQLNDTHPALSIPELMRILVDVEKVDWDKAWEITKKTCAYTNHTVLPEALERWPVSMFEKLLPRHLEIIYAINQRHLDHVAALFPGDVDRLRRMSVIEEGDCKRINMAHLCVIGSHAVNGVARIHSEIVKQSVFKDFYELEPEKFQNKTNGITPRRWLLLCNPGLADTIVEKIGEEFLTDLSQLKKLLPLVSDEVFIRDVAKVKQENKLKFSAFLEKEYKVKINPSSMFDVHVKRIHEYKRQLLNCLHVVTLYNRIKRDPAKAFVPRTVMIGGKAAPGYHMAKLIIKLVTSIGDVVNHDPVVGDRLKVIFLENYRVSLAEKVIPAADLSQQISTAGTEASGTGNMKFMLNGALTIGTMDGANVEMAEEAGAENLFIFGLRVEDVEALDRKGYNAREYYDHLPELKQAVDQISSGFFSPKEPDCFKDIVNMLMHHDRFKVFADYEAYMQCQAQVDQLYRNPKEWTKKVIRNIACSGKFSSDRTITEYAREIWGVEPSDLQIPPPNIPRD</sequence>
<keyword id="KW-0002">3D-structure</keyword>
<keyword id="KW-0007">Acetylation</keyword>
<keyword id="KW-0021">Allosteric enzyme</keyword>
<keyword id="KW-0119">Carbohydrate metabolism</keyword>
<keyword id="KW-0903">Direct protein sequencing</keyword>
<keyword id="KW-0321">Glycogen metabolism</keyword>
<keyword id="KW-0328">Glycosyltransferase</keyword>
<keyword id="KW-0597">Phosphoprotein</keyword>
<keyword id="KW-1267">Proteomics identification</keyword>
<keyword id="KW-0663">Pyridoxal phosphate</keyword>
<keyword id="KW-1185">Reference proteome</keyword>
<keyword id="KW-0808">Transferase</keyword>
<accession>P11216</accession>
<accession>Q96AK1</accession>
<accession>Q9NPX8</accession>
<name>PYGB_HUMAN</name>
<feature type="initiator methionine" description="Removed" evidence="5 7 10 11">
    <location>
        <position position="1"/>
    </location>
</feature>
<feature type="chain" id="PRO_0000188535" description="Glycogen phosphorylase, brain form">
    <location>
        <begin position="2"/>
        <end position="843"/>
    </location>
</feature>
<feature type="region of interest" description="Pyridoxal 5'-phosphate" evidence="6">
    <location>
        <begin position="677"/>
        <end position="678"/>
    </location>
</feature>
<feature type="binding site" evidence="6">
    <location>
        <position position="43"/>
    </location>
    <ligand>
        <name>AMP</name>
        <dbReference type="ChEBI" id="CHEBI:456215"/>
        <note>ligand shared between dimeric partners</note>
    </ligand>
</feature>
<feature type="binding site" description="in other chain" evidence="6">
    <location>
        <position position="197"/>
    </location>
    <ligand>
        <name>AMP</name>
        <dbReference type="ChEBI" id="CHEBI:456215"/>
        <note>ligand shared between dimeric partners</note>
    </ligand>
</feature>
<feature type="binding site" description="in other chain" evidence="6">
    <location>
        <position position="310"/>
    </location>
    <ligand>
        <name>AMP</name>
        <dbReference type="ChEBI" id="CHEBI:456215"/>
        <note>ligand shared between dimeric partners</note>
    </ligand>
</feature>
<feature type="binding site" evidence="6">
    <location>
        <position position="569"/>
    </location>
    <ligand>
        <name>pyridoxal 5'-phosphate</name>
        <dbReference type="ChEBI" id="CHEBI:597326"/>
    </ligand>
</feature>
<feature type="site" description="Participates in a stacking interaction with the adenine ring of AMP" evidence="6">
    <location>
        <position position="76"/>
    </location>
</feature>
<feature type="site" description="Involved in the association of subunits" evidence="1">
    <location>
        <position position="109"/>
    </location>
</feature>
<feature type="site" description="Involved in the association of subunits" evidence="1">
    <location>
        <position position="143"/>
    </location>
</feature>
<feature type="site" description="May be involved in allosteric control" evidence="1">
    <location>
        <position position="156"/>
    </location>
</feature>
<feature type="modified residue" description="N-acetylalanine" evidence="7 10 11">
    <location>
        <position position="2"/>
    </location>
</feature>
<feature type="modified residue" description="Phosphoserine; by PHK; in form phosphorylase A" evidence="3">
    <location>
        <position position="15"/>
    </location>
</feature>
<feature type="modified residue" description="Phosphotyrosine" evidence="4">
    <location>
        <position position="197"/>
    </location>
</feature>
<feature type="modified residue" description="Phosphotyrosine" evidence="4">
    <location>
        <position position="473"/>
    </location>
</feature>
<feature type="modified residue" description="N6-(pyridoxal phosphate)lysine" evidence="6">
    <location>
        <position position="681"/>
    </location>
</feature>
<feature type="sequence variant" id="VAR_034428" description="In dbSNP:rs2228976.">
    <original>A</original>
    <variation>S</variation>
    <location>
        <position position="303"/>
    </location>
</feature>
<feature type="sequence variant" id="VAR_020212" description="In dbSNP:rs2227891.">
    <original>D</original>
    <variation>N</variation>
    <location>
        <position position="502"/>
    </location>
</feature>
<feature type="sequence conflict" description="In Ref. 1 and 2." evidence="9" ref="1 2">
    <original>AK</original>
    <variation>GE</variation>
    <location>
        <begin position="2"/>
        <end position="3"/>
    </location>
</feature>
<feature type="sequence conflict" description="In Ref. 1; AAA59597." evidence="9" ref="1">
    <original>K</original>
    <variation>R</variation>
    <location>
        <position position="248"/>
    </location>
</feature>
<feature type="sequence conflict" description="In Ref. 1; AAA59597." evidence="9" ref="1">
    <original>A</original>
    <variation>G</variation>
    <location>
        <position position="302"/>
    </location>
</feature>
<feature type="sequence conflict" description="In Ref. 1; AAA59597." evidence="9" ref="1">
    <original>IPPPNIPRD</original>
    <variation>LQHLPHPEWESGGATCWAPPELCTHLAMY</variation>
    <location>
        <begin position="835"/>
        <end position="843"/>
    </location>
</feature>
<feature type="helix" evidence="12">
    <location>
        <begin position="23"/>
        <end position="38"/>
    </location>
</feature>
<feature type="turn" evidence="12">
    <location>
        <begin position="44"/>
        <end position="46"/>
    </location>
</feature>
<feature type="helix" evidence="12">
    <location>
        <begin position="49"/>
        <end position="78"/>
    </location>
</feature>
<feature type="strand" evidence="12">
    <location>
        <begin position="82"/>
        <end position="86"/>
    </location>
</feature>
<feature type="helix" evidence="12">
    <location>
        <begin position="96"/>
        <end position="102"/>
    </location>
</feature>
<feature type="helix" evidence="12">
    <location>
        <begin position="106"/>
        <end position="115"/>
    </location>
</feature>
<feature type="helix" evidence="12">
    <location>
        <begin position="120"/>
        <end position="126"/>
    </location>
</feature>
<feature type="strand" evidence="13">
    <location>
        <begin position="130"/>
        <end position="132"/>
    </location>
</feature>
<feature type="helix" evidence="12">
    <location>
        <begin position="136"/>
        <end position="150"/>
    </location>
</feature>
<feature type="strand" evidence="12">
    <location>
        <begin position="155"/>
        <end position="160"/>
    </location>
</feature>
<feature type="strand" evidence="12">
    <location>
        <begin position="168"/>
        <end position="172"/>
    </location>
</feature>
<feature type="strand" evidence="12">
    <location>
        <begin position="175"/>
        <end position="179"/>
    </location>
</feature>
<feature type="turn" evidence="12">
    <location>
        <begin position="183"/>
        <end position="186"/>
    </location>
</feature>
<feature type="helix" evidence="12">
    <location>
        <begin position="195"/>
        <end position="197"/>
    </location>
</feature>
<feature type="strand" evidence="12">
    <location>
        <begin position="199"/>
        <end position="210"/>
    </location>
</feature>
<feature type="strand" evidence="12">
    <location>
        <begin position="213"/>
        <end position="232"/>
    </location>
</feature>
<feature type="strand" evidence="13">
    <location>
        <begin position="234"/>
        <end position="237"/>
    </location>
</feature>
<feature type="strand" evidence="12">
    <location>
        <begin position="239"/>
        <end position="248"/>
    </location>
</feature>
<feature type="helix" evidence="12">
    <location>
        <begin position="260"/>
        <end position="274"/>
    </location>
</feature>
<feature type="helix" evidence="12">
    <location>
        <begin position="275"/>
        <end position="277"/>
    </location>
</feature>
<feature type="strand" evidence="12">
    <location>
        <begin position="279"/>
        <end position="281"/>
    </location>
</feature>
<feature type="helix" evidence="12">
    <location>
        <begin position="290"/>
        <end position="313"/>
    </location>
</feature>
<feature type="helix" evidence="12">
    <location>
        <begin position="326"/>
        <end position="329"/>
    </location>
</feature>
<feature type="helix" evidence="12">
    <location>
        <begin position="330"/>
        <end position="333"/>
    </location>
</feature>
<feature type="strand" evidence="12">
    <location>
        <begin position="334"/>
        <end position="341"/>
    </location>
</feature>
<feature type="helix" evidence="12">
    <location>
        <begin position="342"/>
        <end position="345"/>
    </location>
</feature>
<feature type="helix" evidence="12">
    <location>
        <begin position="346"/>
        <end position="356"/>
    </location>
</feature>
<feature type="helix" evidence="12">
    <location>
        <begin position="362"/>
        <end position="372"/>
    </location>
</feature>
<feature type="strand" evidence="12">
    <location>
        <begin position="373"/>
        <end position="376"/>
    </location>
</feature>
<feature type="helix" evidence="12">
    <location>
        <begin position="382"/>
        <end position="384"/>
    </location>
</feature>
<feature type="strand" evidence="12">
    <location>
        <begin position="387"/>
        <end position="389"/>
    </location>
</feature>
<feature type="helix" evidence="12">
    <location>
        <begin position="390"/>
        <end position="396"/>
    </location>
</feature>
<feature type="helix" evidence="12">
    <location>
        <begin position="398"/>
        <end position="418"/>
    </location>
</feature>
<feature type="helix" evidence="12">
    <location>
        <begin position="423"/>
        <end position="429"/>
    </location>
</feature>
<feature type="strand" evidence="12">
    <location>
        <begin position="431"/>
        <end position="433"/>
    </location>
</feature>
<feature type="strand" evidence="12">
    <location>
        <begin position="435"/>
        <end position="437"/>
    </location>
</feature>
<feature type="strand" evidence="12">
    <location>
        <begin position="439"/>
        <end position="441"/>
    </location>
</feature>
<feature type="helix" evidence="12">
    <location>
        <begin position="442"/>
        <end position="448"/>
    </location>
</feature>
<feature type="strand" evidence="12">
    <location>
        <begin position="453"/>
        <end position="457"/>
    </location>
</feature>
<feature type="helix" evidence="12">
    <location>
        <begin position="458"/>
        <end position="466"/>
    </location>
</feature>
<feature type="turn" evidence="12">
    <location>
        <begin position="467"/>
        <end position="469"/>
    </location>
</feature>
<feature type="helix" evidence="12">
    <location>
        <begin position="470"/>
        <end position="475"/>
    </location>
</feature>
<feature type="helix" evidence="12">
    <location>
        <begin position="477"/>
        <end position="479"/>
    </location>
</feature>
<feature type="strand" evidence="12">
    <location>
        <begin position="480"/>
        <end position="482"/>
    </location>
</feature>
<feature type="helix" evidence="12">
    <location>
        <begin position="490"/>
        <end position="495"/>
    </location>
</feature>
<feature type="helix" evidence="12">
    <location>
        <begin position="498"/>
        <end position="508"/>
    </location>
</feature>
<feature type="helix" evidence="12">
    <location>
        <begin position="511"/>
        <end position="513"/>
    </location>
</feature>
<feature type="helix" evidence="12">
    <location>
        <begin position="516"/>
        <end position="526"/>
    </location>
</feature>
<feature type="helix" evidence="12">
    <location>
        <begin position="529"/>
        <end position="554"/>
    </location>
</feature>
<feature type="strand" evidence="12">
    <location>
        <begin position="562"/>
        <end position="569"/>
    </location>
</feature>
<feature type="turn" evidence="12">
    <location>
        <begin position="573"/>
        <end position="576"/>
    </location>
</feature>
<feature type="helix" evidence="12">
    <location>
        <begin position="577"/>
        <end position="593"/>
    </location>
</feature>
<feature type="strand" evidence="12">
    <location>
        <begin position="602"/>
        <end position="607"/>
    </location>
</feature>
<feature type="helix" evidence="12">
    <location>
        <begin position="615"/>
        <end position="632"/>
    </location>
</feature>
<feature type="turn" evidence="12">
    <location>
        <begin position="635"/>
        <end position="637"/>
    </location>
</feature>
<feature type="helix" evidence="12">
    <location>
        <begin position="638"/>
        <end position="640"/>
    </location>
</feature>
<feature type="strand" evidence="12">
    <location>
        <begin position="641"/>
        <end position="648"/>
    </location>
</feature>
<feature type="helix" evidence="12">
    <location>
        <begin position="651"/>
        <end position="657"/>
    </location>
</feature>
<feature type="helix" evidence="13">
    <location>
        <begin position="658"/>
        <end position="660"/>
    </location>
</feature>
<feature type="strand" evidence="12">
    <location>
        <begin position="662"/>
        <end position="666"/>
    </location>
</feature>
<feature type="turn" evidence="13">
    <location>
        <begin position="670"/>
        <end position="672"/>
    </location>
</feature>
<feature type="helix" evidence="12">
    <location>
        <begin position="678"/>
        <end position="684"/>
    </location>
</feature>
<feature type="strand" evidence="12">
    <location>
        <begin position="688"/>
        <end position="691"/>
    </location>
</feature>
<feature type="helix" evidence="12">
    <location>
        <begin position="696"/>
        <end position="704"/>
    </location>
</feature>
<feature type="helix" evidence="12">
    <location>
        <begin position="706"/>
        <end position="708"/>
    </location>
</feature>
<feature type="strand" evidence="12">
    <location>
        <begin position="709"/>
        <end position="711"/>
    </location>
</feature>
<feature type="helix" evidence="12">
    <location>
        <begin position="716"/>
        <end position="725"/>
    </location>
</feature>
<feature type="helix" evidence="12">
    <location>
        <begin position="730"/>
        <end position="734"/>
    </location>
</feature>
<feature type="helix" evidence="12">
    <location>
        <begin position="737"/>
        <end position="748"/>
    </location>
</feature>
<feature type="turn" evidence="12">
    <location>
        <begin position="749"/>
        <end position="751"/>
    </location>
</feature>
<feature type="strand" evidence="13">
    <location>
        <begin position="753"/>
        <end position="755"/>
    </location>
</feature>
<feature type="turn" evidence="12">
    <location>
        <begin position="756"/>
        <end position="759"/>
    </location>
</feature>
<feature type="helix" evidence="12">
    <location>
        <begin position="760"/>
        <end position="768"/>
    </location>
</feature>
<feature type="helix" evidence="12">
    <location>
        <begin position="774"/>
        <end position="792"/>
    </location>
</feature>
<feature type="helix" evidence="12">
    <location>
        <begin position="795"/>
        <end position="807"/>
    </location>
</feature>
<feature type="helix" evidence="12">
    <location>
        <begin position="810"/>
        <end position="812"/>
    </location>
</feature>
<feature type="helix" evidence="12">
    <location>
        <begin position="814"/>
        <end position="824"/>
    </location>
</feature>
<gene>
    <name evidence="8" type="primary">PYGB</name>
</gene>
<comment type="function">
    <text evidence="6 8">Glycogen phosphorylase that regulates glycogen mobilization (PubMed:27402852). Phosphorylase is an important allosteric enzyme in carbohydrate metabolism (PubMed:3346228). Enzymes from different sources differ in their regulatory mechanisms and in their natural substrates (PubMed:3346228). However, all known phosphorylases share catalytic and structural properties (PubMed:3346228).</text>
</comment>
<comment type="catalytic activity">
    <reaction evidence="6">
        <text>[(1-&gt;4)-alpha-D-glucosyl](n) + phosphate = [(1-&gt;4)-alpha-D-glucosyl](n-1) + alpha-D-glucose 1-phosphate</text>
        <dbReference type="Rhea" id="RHEA:41732"/>
        <dbReference type="Rhea" id="RHEA-COMP:9584"/>
        <dbReference type="Rhea" id="RHEA-COMP:9586"/>
        <dbReference type="ChEBI" id="CHEBI:15444"/>
        <dbReference type="ChEBI" id="CHEBI:43474"/>
        <dbReference type="ChEBI" id="CHEBI:58601"/>
        <dbReference type="EC" id="2.4.1.1"/>
    </reaction>
</comment>
<comment type="cofactor">
    <cofactor>
        <name>pyridoxal 5'-phosphate</name>
        <dbReference type="ChEBI" id="CHEBI:597326"/>
    </cofactor>
</comment>
<comment type="activity regulation">
    <text evidence="6">Activity of phosphorylase is controlled both by allosteric means (through the non-covalent binding of metabolites) and by covalent modification. Thus AMP allosterically activates, whereas ATP, ADP, and glucose-6-phosphate allosterically inhibit, phosphorylase B. Activated upon phosphorylation.</text>
</comment>
<comment type="subunit">
    <text evidence="6">Homodimer. Dimers associate into a tetramer to form the enzymatically active phosphorylase A.</text>
</comment>
<comment type="interaction">
    <interactant intactId="EBI-1047231">
        <id>P11216</id>
    </interactant>
    <interactant intactId="EBI-306914">
        <id>Q13451</id>
        <label>FKBP5</label>
    </interactant>
    <organismsDiffer>false</organismsDiffer>
    <experiments>2</experiments>
</comment>
<comment type="interaction">
    <interactant intactId="EBI-1047231">
        <id>P11216</id>
    </interactant>
    <interactant intactId="EBI-11173743">
        <id>O60741</id>
        <label>HCN1</label>
    </interactant>
    <organismsDiffer>false</organismsDiffer>
    <experiments>6</experiments>
</comment>
<comment type="interaction">
    <interactant intactId="EBI-1047231">
        <id>P11216</id>
    </interactant>
    <interactant intactId="EBI-3918864">
        <id>Q86XI6</id>
        <label>PPP1R3B</label>
    </interactant>
    <organismsDiffer>false</organismsDiffer>
    <experiments>5</experiments>
</comment>
<comment type="interaction">
    <interactant intactId="EBI-1047231">
        <id>P11216</id>
    </interactant>
    <interactant intactId="EBI-2511865">
        <id>P06737</id>
        <label>PYGL</label>
    </interactant>
    <organismsDiffer>false</organismsDiffer>
    <experiments>11</experiments>
</comment>
<comment type="interaction">
    <interactant intactId="EBI-1047231">
        <id>P11216</id>
    </interactant>
    <interactant intactId="EBI-357469">
        <id>P11217</id>
        <label>PYGM</label>
    </interactant>
    <organismsDiffer>false</organismsDiffer>
    <experiments>5</experiments>
</comment>
<comment type="interaction">
    <interactant intactId="EBI-1047231">
        <id>P11216</id>
    </interactant>
    <interactant intactId="EBI-747107">
        <id>Q8IUQ4</id>
        <label>SIAH1</label>
    </interactant>
    <organismsDiffer>false</organismsDiffer>
    <experiments>3</experiments>
</comment>
<comment type="PTM">
    <text evidence="2 6">Phosphorylated (PubMed:27402852). Phosphorylation of Ser-15 converts phosphorylase B (unphosphorylated) to phosphorylase A (By similarity).</text>
</comment>
<comment type="similarity">
    <text evidence="9">Belongs to the glycogen phosphorylase family.</text>
</comment>
<evidence type="ECO:0000250" key="1"/>
<evidence type="ECO:0000250" key="2">
    <source>
        <dbReference type="UniProtKB" id="P11217"/>
    </source>
</evidence>
<evidence type="ECO:0000250" key="3">
    <source>
        <dbReference type="UniProtKB" id="P53534"/>
    </source>
</evidence>
<evidence type="ECO:0000250" key="4">
    <source>
        <dbReference type="UniProtKB" id="Q8CI94"/>
    </source>
</evidence>
<evidence type="ECO:0000269" key="5">
    <source>
    </source>
</evidence>
<evidence type="ECO:0000269" key="6">
    <source>
    </source>
</evidence>
<evidence type="ECO:0000269" key="7">
    <source ref="6"/>
</evidence>
<evidence type="ECO:0000303" key="8">
    <source>
    </source>
</evidence>
<evidence type="ECO:0000305" key="9"/>
<evidence type="ECO:0007744" key="10">
    <source>
    </source>
</evidence>
<evidence type="ECO:0007744" key="11">
    <source>
    </source>
</evidence>
<evidence type="ECO:0007829" key="12">
    <source>
        <dbReference type="PDB" id="5IKO"/>
    </source>
</evidence>
<evidence type="ECO:0007829" key="13">
    <source>
        <dbReference type="PDB" id="5IKP"/>
    </source>
</evidence>
<protein>
    <recommendedName>
        <fullName evidence="8">Glycogen phosphorylase, brain form</fullName>
        <ecNumber evidence="6">2.4.1.1</ecNumber>
    </recommendedName>
</protein>
<dbReference type="EC" id="2.4.1.1" evidence="6"/>
<dbReference type="EMBL" id="J03544">
    <property type="protein sequence ID" value="AAA59597.1"/>
    <property type="molecule type" value="mRNA"/>
</dbReference>
<dbReference type="EMBL" id="U47025">
    <property type="protein sequence ID" value="AAB60395.1"/>
    <property type="molecule type" value="mRNA"/>
</dbReference>
<dbReference type="EMBL" id="AL121772">
    <property type="status" value="NOT_ANNOTATED_CDS"/>
    <property type="molecule type" value="Genomic_DNA"/>
</dbReference>
<dbReference type="EMBL" id="BC017045">
    <property type="protein sequence ID" value="AAH17045.1"/>
    <property type="molecule type" value="mRNA"/>
</dbReference>
<dbReference type="EMBL" id="BC030795">
    <property type="protein sequence ID" value="AAH30795.1"/>
    <property type="molecule type" value="mRNA"/>
</dbReference>
<dbReference type="CCDS" id="CCDS13171.1"/>
<dbReference type="PIR" id="A40138">
    <property type="entry name" value="A40138"/>
</dbReference>
<dbReference type="RefSeq" id="NP_002853.2">
    <property type="nucleotide sequence ID" value="NM_002862.3"/>
</dbReference>
<dbReference type="PDB" id="5IKO">
    <property type="method" value="X-ray"/>
    <property type="resolution" value="2.50 A"/>
    <property type="chains" value="A=1-843"/>
</dbReference>
<dbReference type="PDB" id="5IKP">
    <property type="method" value="X-ray"/>
    <property type="resolution" value="3.40 A"/>
    <property type="chains" value="A=1-843"/>
</dbReference>
<dbReference type="PDBsum" id="5IKO"/>
<dbReference type="PDBsum" id="5IKP"/>
<dbReference type="SMR" id="P11216"/>
<dbReference type="BioGRID" id="111792">
    <property type="interactions" value="150"/>
</dbReference>
<dbReference type="FunCoup" id="P11216">
    <property type="interactions" value="1232"/>
</dbReference>
<dbReference type="IntAct" id="P11216">
    <property type="interactions" value="61"/>
</dbReference>
<dbReference type="MINT" id="P11216"/>
<dbReference type="STRING" id="9606.ENSP00000216962"/>
<dbReference type="BindingDB" id="P11216"/>
<dbReference type="ChEMBL" id="CHEMBL3856"/>
<dbReference type="DrugBank" id="DB03496">
    <property type="generic name" value="Alvocidib"/>
</dbReference>
<dbReference type="DrugBank" id="DB00114">
    <property type="generic name" value="Pyridoxal phosphate"/>
</dbReference>
<dbReference type="CAZy" id="GT35">
    <property type="family name" value="Glycosyltransferase Family 35"/>
</dbReference>
<dbReference type="GlyGen" id="P11216">
    <property type="glycosylation" value="3 sites, 2 N-linked glycans (2 sites), 1 O-linked glycan (1 site)"/>
</dbReference>
<dbReference type="iPTMnet" id="P11216"/>
<dbReference type="MetOSite" id="P11216"/>
<dbReference type="PhosphoSitePlus" id="P11216"/>
<dbReference type="SwissPalm" id="P11216"/>
<dbReference type="BioMuta" id="PYGB"/>
<dbReference type="DMDM" id="20178317"/>
<dbReference type="jPOST" id="P11216"/>
<dbReference type="MassIVE" id="P11216"/>
<dbReference type="PaxDb" id="9606-ENSP00000216962"/>
<dbReference type="PeptideAtlas" id="P11216"/>
<dbReference type="ProteomicsDB" id="52720"/>
<dbReference type="Pumba" id="P11216"/>
<dbReference type="Antibodypedia" id="10014">
    <property type="antibodies" value="617 antibodies from 34 providers"/>
</dbReference>
<dbReference type="DNASU" id="5834"/>
<dbReference type="Ensembl" id="ENST00000216962.9">
    <property type="protein sequence ID" value="ENSP00000216962.3"/>
    <property type="gene ID" value="ENSG00000100994.12"/>
</dbReference>
<dbReference type="GeneID" id="5834"/>
<dbReference type="KEGG" id="hsa:5834"/>
<dbReference type="MANE-Select" id="ENST00000216962.9">
    <property type="protein sequence ID" value="ENSP00000216962.3"/>
    <property type="RefSeq nucleotide sequence ID" value="NM_002862.4"/>
    <property type="RefSeq protein sequence ID" value="NP_002853.2"/>
</dbReference>
<dbReference type="UCSC" id="uc002wup.4">
    <property type="organism name" value="human"/>
</dbReference>
<dbReference type="AGR" id="HGNC:9723"/>
<dbReference type="CTD" id="5834"/>
<dbReference type="DisGeNET" id="5834"/>
<dbReference type="GeneCards" id="PYGB"/>
<dbReference type="HGNC" id="HGNC:9723">
    <property type="gene designation" value="PYGB"/>
</dbReference>
<dbReference type="HPA" id="ENSG00000100994">
    <property type="expression patterns" value="Low tissue specificity"/>
</dbReference>
<dbReference type="MIM" id="138550">
    <property type="type" value="gene"/>
</dbReference>
<dbReference type="neXtProt" id="NX_P11216"/>
<dbReference type="OpenTargets" id="ENSG00000100994"/>
<dbReference type="PharmGKB" id="PA34066"/>
<dbReference type="VEuPathDB" id="HostDB:ENSG00000100994"/>
<dbReference type="eggNOG" id="KOG2099">
    <property type="taxonomic scope" value="Eukaryota"/>
</dbReference>
<dbReference type="GeneTree" id="ENSGT00950000183148"/>
<dbReference type="HOGENOM" id="CLU_010198_1_1_1"/>
<dbReference type="InParanoid" id="P11216"/>
<dbReference type="OMA" id="WLKQANP"/>
<dbReference type="OrthoDB" id="9215500at2759"/>
<dbReference type="PAN-GO" id="P11216">
    <property type="GO annotations" value="4 GO annotations based on evolutionary models"/>
</dbReference>
<dbReference type="PhylomeDB" id="P11216"/>
<dbReference type="TreeFam" id="TF300309"/>
<dbReference type="BioCyc" id="MetaCyc:HS02178-MONOMER"/>
<dbReference type="PathwayCommons" id="P11216"/>
<dbReference type="Reactome" id="R-HSA-6798695">
    <property type="pathway name" value="Neutrophil degranulation"/>
</dbReference>
<dbReference type="Reactome" id="R-HSA-70221">
    <property type="pathway name" value="Glycogen breakdown (glycogenolysis)"/>
</dbReference>
<dbReference type="SignaLink" id="P11216"/>
<dbReference type="SIGNOR" id="P11216"/>
<dbReference type="BioGRID-ORCS" id="5834">
    <property type="hits" value="7 hits in 1150 CRISPR screens"/>
</dbReference>
<dbReference type="CD-CODE" id="FB4E32DD">
    <property type="entry name" value="Presynaptic clusters and postsynaptic densities"/>
</dbReference>
<dbReference type="ChiTaRS" id="PYGB">
    <property type="organism name" value="human"/>
</dbReference>
<dbReference type="GenomeRNAi" id="5834"/>
<dbReference type="Pharos" id="P11216">
    <property type="development level" value="Tchem"/>
</dbReference>
<dbReference type="PRO" id="PR:P11216"/>
<dbReference type="Proteomes" id="UP000005640">
    <property type="component" value="Chromosome 20"/>
</dbReference>
<dbReference type="RNAct" id="P11216">
    <property type="molecule type" value="protein"/>
</dbReference>
<dbReference type="Bgee" id="ENSG00000100994">
    <property type="expression patterns" value="Expressed in lower esophagus muscularis layer and 178 other cell types or tissues"/>
</dbReference>
<dbReference type="ExpressionAtlas" id="P11216">
    <property type="expression patterns" value="baseline and differential"/>
</dbReference>
<dbReference type="GO" id="GO:0035578">
    <property type="term" value="C:azurophil granule lumen"/>
    <property type="evidence" value="ECO:0000304"/>
    <property type="project" value="Reactome"/>
</dbReference>
<dbReference type="GO" id="GO:0005737">
    <property type="term" value="C:cytoplasm"/>
    <property type="evidence" value="ECO:0000314"/>
    <property type="project" value="UniProtKB"/>
</dbReference>
<dbReference type="GO" id="GO:0070062">
    <property type="term" value="C:extracellular exosome"/>
    <property type="evidence" value="ECO:0007005"/>
    <property type="project" value="UniProtKB"/>
</dbReference>
<dbReference type="GO" id="GO:0005576">
    <property type="term" value="C:extracellular region"/>
    <property type="evidence" value="ECO:0000304"/>
    <property type="project" value="Reactome"/>
</dbReference>
<dbReference type="GO" id="GO:0016020">
    <property type="term" value="C:membrane"/>
    <property type="evidence" value="ECO:0007005"/>
    <property type="project" value="UniProtKB"/>
</dbReference>
<dbReference type="GO" id="GO:0008184">
    <property type="term" value="F:glycogen phosphorylase activity"/>
    <property type="evidence" value="ECO:0000318"/>
    <property type="project" value="GO_Central"/>
</dbReference>
<dbReference type="GO" id="GO:0030170">
    <property type="term" value="F:pyridoxal phosphate binding"/>
    <property type="evidence" value="ECO:0000318"/>
    <property type="project" value="GO_Central"/>
</dbReference>
<dbReference type="GO" id="GO:0005980">
    <property type="term" value="P:glycogen catabolic process"/>
    <property type="evidence" value="ECO:0000318"/>
    <property type="project" value="GO_Central"/>
</dbReference>
<dbReference type="CDD" id="cd04300">
    <property type="entry name" value="GT35_Glycogen_Phosphorylase"/>
    <property type="match status" value="1"/>
</dbReference>
<dbReference type="FunFam" id="3.40.50.2000:FF:000005">
    <property type="entry name" value="Alpha-1,4 glucan phosphorylase"/>
    <property type="match status" value="1"/>
</dbReference>
<dbReference type="FunFam" id="3.40.50.2000:FF:000153">
    <property type="entry name" value="Alpha-1,4 glucan phosphorylase"/>
    <property type="match status" value="1"/>
</dbReference>
<dbReference type="FunFam" id="3.40.50.2000:FF:000197">
    <property type="entry name" value="Alpha-1,4 glucan phosphorylase"/>
    <property type="match status" value="1"/>
</dbReference>
<dbReference type="Gene3D" id="3.40.50.2000">
    <property type="entry name" value="Glycogen Phosphorylase B"/>
    <property type="match status" value="2"/>
</dbReference>
<dbReference type="InterPro" id="IPR011833">
    <property type="entry name" value="Glycg_phsphrylas"/>
</dbReference>
<dbReference type="InterPro" id="IPR000811">
    <property type="entry name" value="Glyco_trans_35"/>
</dbReference>
<dbReference type="InterPro" id="IPR035090">
    <property type="entry name" value="Pyridoxal_P_attach_site"/>
</dbReference>
<dbReference type="NCBIfam" id="TIGR02093">
    <property type="entry name" value="P_ylase"/>
    <property type="match status" value="1"/>
</dbReference>
<dbReference type="PANTHER" id="PTHR11468">
    <property type="entry name" value="GLYCOGEN PHOSPHORYLASE"/>
    <property type="match status" value="1"/>
</dbReference>
<dbReference type="PANTHER" id="PTHR11468:SF29">
    <property type="entry name" value="GLYCOGEN PHOSPHORYLASE, BRAIN FORM"/>
    <property type="match status" value="1"/>
</dbReference>
<dbReference type="Pfam" id="PF00343">
    <property type="entry name" value="Phosphorylase"/>
    <property type="match status" value="1"/>
</dbReference>
<dbReference type="PIRSF" id="PIRSF000460">
    <property type="entry name" value="Pprylas_GlgP"/>
    <property type="match status" value="1"/>
</dbReference>
<dbReference type="SUPFAM" id="SSF53756">
    <property type="entry name" value="UDP-Glycosyltransferase/glycogen phosphorylase"/>
    <property type="match status" value="1"/>
</dbReference>
<dbReference type="PROSITE" id="PS00102">
    <property type="entry name" value="PHOSPHORYLASE"/>
    <property type="match status" value="1"/>
</dbReference>
<reference key="1">
    <citation type="journal article" date="1988" name="J. Biol. Chem.">
        <title>Human brain glycogen phosphorylase. Cloning, sequence analysis, chromosomal mapping, tissue expression, and comparison with the human liver and muscle isozymes.</title>
        <authorList>
            <person name="Newgard C.B."/>
            <person name="Littman D.R."/>
            <person name="van Genderen C."/>
            <person name="Smith M."/>
            <person name="Fletterick R.J."/>
        </authorList>
    </citation>
    <scope>NUCLEOTIDE SEQUENCE [MRNA]</scope>
    <source>
        <tissue>Brain</tissue>
    </source>
</reference>
<reference key="2">
    <citation type="journal article" date="1989" name="Brain Res. Mol. Brain Res.">
        <title>Human brain glycogen phosphorylase: characterization of fetal cDNA and genomic sequences.</title>
        <authorList>
            <person name="Gelinas R.P."/>
            <person name="Froman B.E."/>
            <person name="McElroy F."/>
            <person name="Tait R.C."/>
            <person name="Gorin F.A."/>
        </authorList>
    </citation>
    <scope>NUCLEOTIDE SEQUENCE [MRNA]</scope>
    <source>
        <tissue>Brain</tissue>
    </source>
</reference>
<reference key="3">
    <citation type="journal article" date="2001" name="Nature">
        <title>The DNA sequence and comparative analysis of human chromosome 20.</title>
        <authorList>
            <person name="Deloukas P."/>
            <person name="Matthews L.H."/>
            <person name="Ashurst J.L."/>
            <person name="Burton J."/>
            <person name="Gilbert J.G.R."/>
            <person name="Jones M."/>
            <person name="Stavrides G."/>
            <person name="Almeida J.P."/>
            <person name="Babbage A.K."/>
            <person name="Bagguley C.L."/>
            <person name="Bailey J."/>
            <person name="Barlow K.F."/>
            <person name="Bates K.N."/>
            <person name="Beard L.M."/>
            <person name="Beare D.M."/>
            <person name="Beasley O.P."/>
            <person name="Bird C.P."/>
            <person name="Blakey S.E."/>
            <person name="Bridgeman A.M."/>
            <person name="Brown A.J."/>
            <person name="Buck D."/>
            <person name="Burrill W.D."/>
            <person name="Butler A.P."/>
            <person name="Carder C."/>
            <person name="Carter N.P."/>
            <person name="Chapman J.C."/>
            <person name="Clamp M."/>
            <person name="Clark G."/>
            <person name="Clark L.N."/>
            <person name="Clark S.Y."/>
            <person name="Clee C.M."/>
            <person name="Clegg S."/>
            <person name="Cobley V.E."/>
            <person name="Collier R.E."/>
            <person name="Connor R.E."/>
            <person name="Corby N.R."/>
            <person name="Coulson A."/>
            <person name="Coville G.J."/>
            <person name="Deadman R."/>
            <person name="Dhami P.D."/>
            <person name="Dunn M."/>
            <person name="Ellington A.G."/>
            <person name="Frankland J.A."/>
            <person name="Fraser A."/>
            <person name="French L."/>
            <person name="Garner P."/>
            <person name="Grafham D.V."/>
            <person name="Griffiths C."/>
            <person name="Griffiths M.N.D."/>
            <person name="Gwilliam R."/>
            <person name="Hall R.E."/>
            <person name="Hammond S."/>
            <person name="Harley J.L."/>
            <person name="Heath P.D."/>
            <person name="Ho S."/>
            <person name="Holden J.L."/>
            <person name="Howden P.J."/>
            <person name="Huckle E."/>
            <person name="Hunt A.R."/>
            <person name="Hunt S.E."/>
            <person name="Jekosch K."/>
            <person name="Johnson C.M."/>
            <person name="Johnson D."/>
            <person name="Kay M.P."/>
            <person name="Kimberley A.M."/>
            <person name="King A."/>
            <person name="Knights A."/>
            <person name="Laird G.K."/>
            <person name="Lawlor S."/>
            <person name="Lehvaeslaiho M.H."/>
            <person name="Leversha M.A."/>
            <person name="Lloyd C."/>
            <person name="Lloyd D.M."/>
            <person name="Lovell J.D."/>
            <person name="Marsh V.L."/>
            <person name="Martin S.L."/>
            <person name="McConnachie L.J."/>
            <person name="McLay K."/>
            <person name="McMurray A.A."/>
            <person name="Milne S.A."/>
            <person name="Mistry D."/>
            <person name="Moore M.J.F."/>
            <person name="Mullikin J.C."/>
            <person name="Nickerson T."/>
            <person name="Oliver K."/>
            <person name="Parker A."/>
            <person name="Patel R."/>
            <person name="Pearce T.A.V."/>
            <person name="Peck A.I."/>
            <person name="Phillimore B.J.C.T."/>
            <person name="Prathalingam S.R."/>
            <person name="Plumb R.W."/>
            <person name="Ramsay H."/>
            <person name="Rice C.M."/>
            <person name="Ross M.T."/>
            <person name="Scott C.E."/>
            <person name="Sehra H.K."/>
            <person name="Shownkeen R."/>
            <person name="Sims S."/>
            <person name="Skuce C.D."/>
            <person name="Smith M.L."/>
            <person name="Soderlund C."/>
            <person name="Steward C.A."/>
            <person name="Sulston J.E."/>
            <person name="Swann R.M."/>
            <person name="Sycamore N."/>
            <person name="Taylor R."/>
            <person name="Tee L."/>
            <person name="Thomas D.W."/>
            <person name="Thorpe A."/>
            <person name="Tracey A."/>
            <person name="Tromans A.C."/>
            <person name="Vaudin M."/>
            <person name="Wall M."/>
            <person name="Wallis J.M."/>
            <person name="Whitehead S.L."/>
            <person name="Whittaker P."/>
            <person name="Willey D.L."/>
            <person name="Williams L."/>
            <person name="Williams S.A."/>
            <person name="Wilming L."/>
            <person name="Wray P.W."/>
            <person name="Hubbard T."/>
            <person name="Durbin R.M."/>
            <person name="Bentley D.R."/>
            <person name="Beck S."/>
            <person name="Rogers J."/>
        </authorList>
    </citation>
    <scope>NUCLEOTIDE SEQUENCE [LARGE SCALE GENOMIC DNA]</scope>
</reference>
<reference key="4">
    <citation type="journal article" date="2004" name="Genome Res.">
        <title>The status, quality, and expansion of the NIH full-length cDNA project: the Mammalian Gene Collection (MGC).</title>
        <authorList>
            <consortium name="The MGC Project Team"/>
        </authorList>
    </citation>
    <scope>NUCLEOTIDE SEQUENCE [LARGE SCALE MRNA]</scope>
    <source>
        <tissue>Lung</tissue>
        <tissue>Skin</tissue>
    </source>
</reference>
<reference key="5">
    <citation type="journal article" date="2003" name="Nat. Biotechnol.">
        <title>Exploring proteomes and analyzing protein processing by mass spectrometric identification of sorted N-terminal peptides.</title>
        <authorList>
            <person name="Gevaert K."/>
            <person name="Goethals M."/>
            <person name="Martens L."/>
            <person name="Van Damme J."/>
            <person name="Staes A."/>
            <person name="Thomas G.R."/>
            <person name="Vandekerckhove J."/>
        </authorList>
    </citation>
    <scope>PROTEIN SEQUENCE OF 2-11</scope>
    <source>
        <tissue>Platelet</tissue>
    </source>
</reference>
<reference key="6">
    <citation type="submission" date="2007-07" db="UniProtKB">
        <authorList>
            <person name="Bienvenut W.V."/>
            <person name="Murray L."/>
            <person name="Brunton V.G."/>
            <person name="Frame M.C."/>
        </authorList>
    </citation>
    <scope>PROTEIN SEQUENCE OF 2-11; 18-30; 51-61; 71-78; 193-206; 271-278; 353-359; 388-395; 400-425; 508-520; 522-533; 546-552; 558-569; 577-590; 623-640; 657-681; 731-754 AND 817-823</scope>
    <scope>CLEAVAGE OF INITIATOR METHIONINE</scope>
    <scope>ACETYLATION AT ALA-2</scope>
    <scope>IDENTIFICATION BY MASS SPECTROMETRY</scope>
    <source>
        <tissue>Colon adenocarcinoma</tissue>
    </source>
</reference>
<reference key="7">
    <citation type="journal article" date="2009" name="Anal. Chem.">
        <title>Lys-N and trypsin cover complementary parts of the phosphoproteome in a refined SCX-based approach.</title>
        <authorList>
            <person name="Gauci S."/>
            <person name="Helbig A.O."/>
            <person name="Slijper M."/>
            <person name="Krijgsveld J."/>
            <person name="Heck A.J."/>
            <person name="Mohammed S."/>
        </authorList>
    </citation>
    <scope>ACETYLATION [LARGE SCALE ANALYSIS] AT ALA-2</scope>
    <scope>CLEAVAGE OF INITIATOR METHIONINE [LARGE SCALE ANALYSIS]</scope>
    <scope>IDENTIFICATION BY MASS SPECTROMETRY [LARGE SCALE ANALYSIS]</scope>
</reference>
<reference key="8">
    <citation type="journal article" date="2011" name="BMC Syst. Biol.">
        <title>Initial characterization of the human central proteome.</title>
        <authorList>
            <person name="Burkard T.R."/>
            <person name="Planyavsky M."/>
            <person name="Kaupe I."/>
            <person name="Breitwieser F.P."/>
            <person name="Buerckstuemmer T."/>
            <person name="Bennett K.L."/>
            <person name="Superti-Furga G."/>
            <person name="Colinge J."/>
        </authorList>
    </citation>
    <scope>IDENTIFICATION BY MASS SPECTROMETRY [LARGE SCALE ANALYSIS]</scope>
</reference>
<reference key="9">
    <citation type="journal article" date="2012" name="Proc. Natl. Acad. Sci. U.S.A.">
        <title>N-terminal acetylome analyses and functional insights of the N-terminal acetyltransferase NatB.</title>
        <authorList>
            <person name="Van Damme P."/>
            <person name="Lasa M."/>
            <person name="Polevoda B."/>
            <person name="Gazquez C."/>
            <person name="Elosegui-Artola A."/>
            <person name="Kim D.S."/>
            <person name="De Juan-Pardo E."/>
            <person name="Demeyer K."/>
            <person name="Hole K."/>
            <person name="Larrea E."/>
            <person name="Timmerman E."/>
            <person name="Prieto J."/>
            <person name="Arnesen T."/>
            <person name="Sherman F."/>
            <person name="Gevaert K."/>
            <person name="Aldabe R."/>
        </authorList>
    </citation>
    <scope>ACETYLATION [LARGE SCALE ANALYSIS] AT ALA-2</scope>
    <scope>CLEAVAGE OF INITIATOR METHIONINE [LARGE SCALE ANALYSIS]</scope>
    <scope>IDENTIFICATION BY MASS SPECTROMETRY [LARGE SCALE ANALYSIS]</scope>
</reference>
<reference key="10">
    <citation type="journal article" date="2014" name="J. Proteomics">
        <title>An enzyme assisted RP-RPLC approach for in-depth analysis of human liver phosphoproteome.</title>
        <authorList>
            <person name="Bian Y."/>
            <person name="Song C."/>
            <person name="Cheng K."/>
            <person name="Dong M."/>
            <person name="Wang F."/>
            <person name="Huang J."/>
            <person name="Sun D."/>
            <person name="Wang L."/>
            <person name="Ye M."/>
            <person name="Zou H."/>
        </authorList>
    </citation>
    <scope>IDENTIFICATION BY MASS SPECTROMETRY [LARGE SCALE ANALYSIS]</scope>
    <source>
        <tissue>Liver</tissue>
    </source>
</reference>
<reference key="11">
    <citation type="journal article" date="2016" name="J. Biol. Chem.">
        <title>Insights into Brain Glycogen Metabolism: THE STRUCTURE OF HUMAN BRAIN GLYCOGEN PHOSPHORYLASE.</title>
        <authorList>
            <person name="Mathieu C."/>
            <person name="de la Sierra-Gallay I.L."/>
            <person name="Duval R."/>
            <person name="Xu X."/>
            <person name="Cocaign A."/>
            <person name="Leger T."/>
            <person name="Woffendin G."/>
            <person name="Camadro J.M."/>
            <person name="Etchebest C."/>
            <person name="Haouz A."/>
            <person name="Dupret J.M."/>
            <person name="Rodrigues-Lima F."/>
        </authorList>
    </citation>
    <scope>X-RAY CRYSTALLOGRAPHY (2.50 ANGSTROMS) OF 1-843 IN COMPLEX WITH AMP</scope>
    <scope>FUNCTION</scope>
    <scope>CATALYTIC ACTIVITY</scope>
    <scope>ACTIVITY REGULATION</scope>
    <scope>SUBUNIT</scope>
    <scope>PHOSPHORYLATION</scope>
</reference>
<organism>
    <name type="scientific">Homo sapiens</name>
    <name type="common">Human</name>
    <dbReference type="NCBI Taxonomy" id="9606"/>
    <lineage>
        <taxon>Eukaryota</taxon>
        <taxon>Metazoa</taxon>
        <taxon>Chordata</taxon>
        <taxon>Craniata</taxon>
        <taxon>Vertebrata</taxon>
        <taxon>Euteleostomi</taxon>
        <taxon>Mammalia</taxon>
        <taxon>Eutheria</taxon>
        <taxon>Euarchontoglires</taxon>
        <taxon>Primates</taxon>
        <taxon>Haplorrhini</taxon>
        <taxon>Catarrhini</taxon>
        <taxon>Hominidae</taxon>
        <taxon>Homo</taxon>
    </lineage>
</organism>
<proteinExistence type="evidence at protein level"/>